<protein>
    <recommendedName>
        <fullName>Microsomal glutathione S-transferase 2</fullName>
        <shortName>Microsomal GST-2</shortName>
        <ecNumber evidence="1">2.5.1.18</ecNumber>
    </recommendedName>
    <alternativeName>
        <fullName>Glutathione peroxidase MGST2</fullName>
        <ecNumber evidence="1">1.11.1.-</ecNumber>
    </alternativeName>
    <alternativeName>
        <fullName>Leukotriene C4 synthase MGST2</fullName>
        <ecNumber evidence="1">4.4.1.20</ecNumber>
    </alternativeName>
    <alternativeName>
        <fullName>Microsomal glutathione S-transferase II</fullName>
        <shortName>Microsomal GST-II</shortName>
    </alternativeName>
</protein>
<dbReference type="EC" id="2.5.1.18" evidence="1"/>
<dbReference type="EC" id="1.11.1.-" evidence="1"/>
<dbReference type="EC" id="4.4.1.20" evidence="1"/>
<dbReference type="EMBL" id="AC102860">
    <property type="status" value="NOT_ANNOTATED_CDS"/>
    <property type="molecule type" value="Genomic_DNA"/>
</dbReference>
<dbReference type="EMBL" id="AC116729">
    <property type="status" value="NOT_ANNOTATED_CDS"/>
    <property type="molecule type" value="Genomic_DNA"/>
</dbReference>
<dbReference type="EMBL" id="BC132234">
    <property type="protein sequence ID" value="AAI32235.1"/>
    <property type="molecule type" value="mRNA"/>
</dbReference>
<dbReference type="EMBL" id="BC132260">
    <property type="protein sequence ID" value="AAI32261.1"/>
    <property type="molecule type" value="mRNA"/>
</dbReference>
<dbReference type="CCDS" id="CCDS38428.1"/>
<dbReference type="RefSeq" id="NP_778160.2">
    <property type="nucleotide sequence ID" value="NM_174995.3"/>
</dbReference>
<dbReference type="SMR" id="A2RST1"/>
<dbReference type="FunCoup" id="A2RST1">
    <property type="interactions" value="439"/>
</dbReference>
<dbReference type="STRING" id="10090.ENSMUSP00000096705"/>
<dbReference type="PhosphoSitePlus" id="A2RST1"/>
<dbReference type="PaxDb" id="10090-ENSMUSP00000096705"/>
<dbReference type="ProteomicsDB" id="337268"/>
<dbReference type="Pumba" id="A2RST1"/>
<dbReference type="Antibodypedia" id="2759">
    <property type="antibodies" value="171 antibodies from 28 providers"/>
</dbReference>
<dbReference type="DNASU" id="211666"/>
<dbReference type="Ensembl" id="ENSMUST00000099106.10">
    <property type="protein sequence ID" value="ENSMUSP00000096705.4"/>
    <property type="gene ID" value="ENSMUSG00000074604.10"/>
</dbReference>
<dbReference type="GeneID" id="211666"/>
<dbReference type="KEGG" id="mmu:211666"/>
<dbReference type="UCSC" id="uc008ped.1">
    <property type="organism name" value="mouse"/>
</dbReference>
<dbReference type="AGR" id="MGI:2448481"/>
<dbReference type="CTD" id="4258"/>
<dbReference type="MGI" id="MGI:2448481">
    <property type="gene designation" value="Mgst2"/>
</dbReference>
<dbReference type="VEuPathDB" id="HostDB:ENSMUSG00000074604"/>
<dbReference type="eggNOG" id="ENOG502S082">
    <property type="taxonomic scope" value="Eukaryota"/>
</dbReference>
<dbReference type="GeneTree" id="ENSGT00940000160288"/>
<dbReference type="HOGENOM" id="CLU_110291_3_0_1"/>
<dbReference type="InParanoid" id="A2RST1"/>
<dbReference type="OMA" id="HKYFWGY"/>
<dbReference type="OrthoDB" id="410651at2759"/>
<dbReference type="PhylomeDB" id="A2RST1"/>
<dbReference type="TreeFam" id="TF105328"/>
<dbReference type="Reactome" id="R-MMU-156590">
    <property type="pathway name" value="Glutathione conjugation"/>
</dbReference>
<dbReference type="Reactome" id="R-MMU-5423646">
    <property type="pathway name" value="Aflatoxin activation and detoxification"/>
</dbReference>
<dbReference type="BioGRID-ORCS" id="211666">
    <property type="hits" value="0 hits in 79 CRISPR screens"/>
</dbReference>
<dbReference type="ChiTaRS" id="Mgst2">
    <property type="organism name" value="mouse"/>
</dbReference>
<dbReference type="PRO" id="PR:A2RST1"/>
<dbReference type="Proteomes" id="UP000000589">
    <property type="component" value="Chromosome 3"/>
</dbReference>
<dbReference type="RNAct" id="A2RST1">
    <property type="molecule type" value="protein"/>
</dbReference>
<dbReference type="Bgee" id="ENSMUSG00000074604">
    <property type="expression patterns" value="Expressed in mucosa of stomach and 131 other cell types or tissues"/>
</dbReference>
<dbReference type="ExpressionAtlas" id="A2RST1">
    <property type="expression patterns" value="baseline and differential"/>
</dbReference>
<dbReference type="GO" id="GO:0005789">
    <property type="term" value="C:endoplasmic reticulum membrane"/>
    <property type="evidence" value="ECO:0007669"/>
    <property type="project" value="UniProtKB-SubCell"/>
</dbReference>
<dbReference type="GO" id="GO:0043231">
    <property type="term" value="C:intracellular membrane-bounded organelle"/>
    <property type="evidence" value="ECO:0000250"/>
    <property type="project" value="UniProtKB"/>
</dbReference>
<dbReference type="GO" id="GO:0005886">
    <property type="term" value="C:plasma membrane"/>
    <property type="evidence" value="ECO:0007669"/>
    <property type="project" value="Ensembl"/>
</dbReference>
<dbReference type="GO" id="GO:0008047">
    <property type="term" value="F:enzyme activator activity"/>
    <property type="evidence" value="ECO:0007669"/>
    <property type="project" value="InterPro"/>
</dbReference>
<dbReference type="GO" id="GO:0043295">
    <property type="term" value="F:glutathione binding"/>
    <property type="evidence" value="ECO:0000250"/>
    <property type="project" value="UniProtKB"/>
</dbReference>
<dbReference type="GO" id="GO:0004602">
    <property type="term" value="F:glutathione peroxidase activity"/>
    <property type="evidence" value="ECO:0000250"/>
    <property type="project" value="UniProtKB"/>
</dbReference>
<dbReference type="GO" id="GO:0004364">
    <property type="term" value="F:glutathione transferase activity"/>
    <property type="evidence" value="ECO:0007669"/>
    <property type="project" value="UniProtKB-EC"/>
</dbReference>
<dbReference type="GO" id="GO:0042802">
    <property type="term" value="F:identical protein binding"/>
    <property type="evidence" value="ECO:0000250"/>
    <property type="project" value="UniProtKB"/>
</dbReference>
<dbReference type="GO" id="GO:0004464">
    <property type="term" value="F:leukotriene-C4 synthase activity"/>
    <property type="evidence" value="ECO:0000250"/>
    <property type="project" value="UniProtKB"/>
</dbReference>
<dbReference type="GO" id="GO:0006750">
    <property type="term" value="P:glutathione biosynthetic process"/>
    <property type="evidence" value="ECO:0007669"/>
    <property type="project" value="Ensembl"/>
</dbReference>
<dbReference type="GO" id="GO:0019370">
    <property type="term" value="P:leukotriene biosynthetic process"/>
    <property type="evidence" value="ECO:0000250"/>
    <property type="project" value="UniProtKB"/>
</dbReference>
<dbReference type="GO" id="GO:0006629">
    <property type="term" value="P:lipid metabolic process"/>
    <property type="evidence" value="ECO:0000250"/>
    <property type="project" value="UniProtKB"/>
</dbReference>
<dbReference type="GO" id="GO:0046466">
    <property type="term" value="P:membrane lipid catabolic process"/>
    <property type="evidence" value="ECO:0007669"/>
    <property type="project" value="Ensembl"/>
</dbReference>
<dbReference type="GO" id="GO:0032496">
    <property type="term" value="P:response to lipopolysaccharide"/>
    <property type="evidence" value="ECO:0007669"/>
    <property type="project" value="Ensembl"/>
</dbReference>
<dbReference type="FunFam" id="1.20.120.550:FF:000003">
    <property type="entry name" value="Leukotriene C4 synthase"/>
    <property type="match status" value="1"/>
</dbReference>
<dbReference type="Gene3D" id="1.20.120.550">
    <property type="entry name" value="Membrane associated eicosanoid/glutathione metabolism-like domain"/>
    <property type="match status" value="1"/>
</dbReference>
<dbReference type="InterPro" id="IPR001446">
    <property type="entry name" value="5_LipOase_AP"/>
</dbReference>
<dbReference type="InterPro" id="IPR050997">
    <property type="entry name" value="MAPEG"/>
</dbReference>
<dbReference type="InterPro" id="IPR023352">
    <property type="entry name" value="MAPEG-like_dom_sf"/>
</dbReference>
<dbReference type="InterPro" id="IPR001129">
    <property type="entry name" value="Membr-assoc_MAPEG"/>
</dbReference>
<dbReference type="PANTHER" id="PTHR10250">
    <property type="entry name" value="MICROSOMAL GLUTATHIONE S-TRANSFERASE"/>
    <property type="match status" value="1"/>
</dbReference>
<dbReference type="PANTHER" id="PTHR10250:SF13">
    <property type="entry name" value="MICROSOMAL GLUTATHIONE S-TRANSFERASE 2"/>
    <property type="match status" value="1"/>
</dbReference>
<dbReference type="Pfam" id="PF01124">
    <property type="entry name" value="MAPEG"/>
    <property type="match status" value="1"/>
</dbReference>
<dbReference type="PRINTS" id="PR00488">
    <property type="entry name" value="5LPOXGNASEAP"/>
</dbReference>
<dbReference type="SUPFAM" id="SSF161084">
    <property type="entry name" value="MAPEG domain-like"/>
    <property type="match status" value="1"/>
</dbReference>
<evidence type="ECO:0000250" key="1">
    <source>
        <dbReference type="UniProtKB" id="Q99735"/>
    </source>
</evidence>
<evidence type="ECO:0000255" key="2"/>
<evidence type="ECO:0000269" key="3">
    <source>
    </source>
</evidence>
<evidence type="ECO:0000312" key="4">
    <source>
        <dbReference type="MGI" id="MGI:2448481"/>
    </source>
</evidence>
<organism>
    <name type="scientific">Mus musculus</name>
    <name type="common">Mouse</name>
    <dbReference type="NCBI Taxonomy" id="10090"/>
    <lineage>
        <taxon>Eukaryota</taxon>
        <taxon>Metazoa</taxon>
        <taxon>Chordata</taxon>
        <taxon>Craniata</taxon>
        <taxon>Vertebrata</taxon>
        <taxon>Euteleostomi</taxon>
        <taxon>Mammalia</taxon>
        <taxon>Eutheria</taxon>
        <taxon>Euarchontoglires</taxon>
        <taxon>Glires</taxon>
        <taxon>Rodentia</taxon>
        <taxon>Myomorpha</taxon>
        <taxon>Muroidea</taxon>
        <taxon>Muridae</taxon>
        <taxon>Murinae</taxon>
        <taxon>Mus</taxon>
        <taxon>Mus</taxon>
    </lineage>
</organism>
<gene>
    <name evidence="4" type="primary">Mgst2</name>
    <name type="synonym">Gst2</name>
</gene>
<name>MGST2_MOUSE</name>
<sequence length="147" mass="16786">MAGDSSLLAAVSLLSACQQSYFAWRVGRARLKHKIAPPAVTGPLEFERIFRAQQNSLEFYPVFIVMLWMAGWYFNQVFAACLGLLYIYARHKYFWGYAEAAEKRITGFRLSLGILTLLPVLAVLGVASRFLNEYLDFHVAKKLRKPF</sequence>
<reference key="1">
    <citation type="journal article" date="2009" name="PLoS Biol.">
        <title>Lineage-specific biology revealed by a finished genome assembly of the mouse.</title>
        <authorList>
            <person name="Church D.M."/>
            <person name="Goodstadt L."/>
            <person name="Hillier L.W."/>
            <person name="Zody M.C."/>
            <person name="Goldstein S."/>
            <person name="She X."/>
            <person name="Bult C.J."/>
            <person name="Agarwala R."/>
            <person name="Cherry J.L."/>
            <person name="DiCuccio M."/>
            <person name="Hlavina W."/>
            <person name="Kapustin Y."/>
            <person name="Meric P."/>
            <person name="Maglott D."/>
            <person name="Birtle Z."/>
            <person name="Marques A.C."/>
            <person name="Graves T."/>
            <person name="Zhou S."/>
            <person name="Teague B."/>
            <person name="Potamousis K."/>
            <person name="Churas C."/>
            <person name="Place M."/>
            <person name="Herschleb J."/>
            <person name="Runnheim R."/>
            <person name="Forrest D."/>
            <person name="Amos-Landgraf J."/>
            <person name="Schwartz D.C."/>
            <person name="Cheng Z."/>
            <person name="Lindblad-Toh K."/>
            <person name="Eichler E.E."/>
            <person name="Ponting C.P."/>
        </authorList>
    </citation>
    <scope>NUCLEOTIDE SEQUENCE [LARGE SCALE GENOMIC DNA]</scope>
    <source>
        <strain>C57BL/6J</strain>
    </source>
</reference>
<reference key="2">
    <citation type="journal article" date="2004" name="Genome Res.">
        <title>The status, quality, and expansion of the NIH full-length cDNA project: the Mammalian Gene Collection (MGC).</title>
        <authorList>
            <consortium name="The MGC Project Team"/>
        </authorList>
    </citation>
    <scope>NUCLEOTIDE SEQUENCE [LARGE SCALE MRNA]</scope>
    <source>
        <tissue>Testis</tissue>
    </source>
</reference>
<reference key="3">
    <citation type="journal article" date="2015" name="Nat. Commun.">
        <title>Leukotriene C4 is the major trigger of stress-induced oxidative DNA damage.</title>
        <authorList>
            <person name="Dvash E."/>
            <person name="Har-Tal M."/>
            <person name="Barak S."/>
            <person name="Meir O."/>
            <person name="Rubinstein M."/>
        </authorList>
    </citation>
    <scope>DISRUPTION PHENOTYPE</scope>
    <scope>FUNCTION</scope>
</reference>
<keyword id="KW-0256">Endoplasmic reticulum</keyword>
<keyword id="KW-0434">Leukotriene biosynthesis</keyword>
<keyword id="KW-0443">Lipid metabolism</keyword>
<keyword id="KW-0456">Lyase</keyword>
<keyword id="KW-0472">Membrane</keyword>
<keyword id="KW-0492">Microsome</keyword>
<keyword id="KW-0560">Oxidoreductase</keyword>
<keyword id="KW-1185">Reference proteome</keyword>
<keyword id="KW-0808">Transferase</keyword>
<keyword id="KW-0812">Transmembrane</keyword>
<keyword id="KW-1133">Transmembrane helix</keyword>
<proteinExistence type="evidence at transcript level"/>
<accession>A2RST1</accession>
<comment type="function">
    <text evidence="1 3">Catalyzes several different glutathione-dependent reactions. Catalyzes the glutathione-dependent reduction of lipid hydroperoxides, such as 5-HPETE. Has glutathione transferase activity, toward xenobiotic electrophiles, such as 1-chloro-2, 4-dinitrobenzene (CDNB). Also catalyzes the conjugation of leukotriene A4 with reduced glutathione to form leukotriene C4 (LTC4) (By similarity). Involved in oxidative DNA damage induced by ER stress and anticancer agents by activating LTC4 biosynthetic machinery in nonimmune cells (PubMed:26656251).</text>
</comment>
<comment type="catalytic activity">
    <reaction evidence="1">
        <text>RX + glutathione = an S-substituted glutathione + a halide anion + H(+)</text>
        <dbReference type="Rhea" id="RHEA:16437"/>
        <dbReference type="ChEBI" id="CHEBI:15378"/>
        <dbReference type="ChEBI" id="CHEBI:16042"/>
        <dbReference type="ChEBI" id="CHEBI:17792"/>
        <dbReference type="ChEBI" id="CHEBI:57925"/>
        <dbReference type="ChEBI" id="CHEBI:90779"/>
        <dbReference type="EC" id="2.5.1.18"/>
    </reaction>
</comment>
<comment type="catalytic activity">
    <reaction evidence="1">
        <text>1-chloro-2,4-dinitrobenzene + glutathione = 2,4-dinitrophenyl-S-glutathione + chloride + H(+)</text>
        <dbReference type="Rhea" id="RHEA:51220"/>
        <dbReference type="ChEBI" id="CHEBI:15378"/>
        <dbReference type="ChEBI" id="CHEBI:17996"/>
        <dbReference type="ChEBI" id="CHEBI:34718"/>
        <dbReference type="ChEBI" id="CHEBI:57925"/>
        <dbReference type="ChEBI" id="CHEBI:133977"/>
        <dbReference type="EC" id="2.5.1.18"/>
    </reaction>
</comment>
<comment type="catalytic activity">
    <reaction evidence="1">
        <text>leukotriene C4 = leukotriene A4 + glutathione</text>
        <dbReference type="Rhea" id="RHEA:17617"/>
        <dbReference type="ChEBI" id="CHEBI:57463"/>
        <dbReference type="ChEBI" id="CHEBI:57925"/>
        <dbReference type="ChEBI" id="CHEBI:57973"/>
        <dbReference type="EC" id="4.4.1.20"/>
    </reaction>
</comment>
<comment type="catalytic activity">
    <reaction evidence="1">
        <text>(5S)-hydroperoxy-(6E,8Z,11Z,14Z)-eicosatetraenoate + 2 glutathione = (5S)-hydroxy-(6E,8Z,11Z,14Z)-eicosatetraenoate + glutathione disulfide + H2O</text>
        <dbReference type="Rhea" id="RHEA:48620"/>
        <dbReference type="ChEBI" id="CHEBI:15377"/>
        <dbReference type="ChEBI" id="CHEBI:57450"/>
        <dbReference type="ChEBI" id="CHEBI:57925"/>
        <dbReference type="ChEBI" id="CHEBI:58297"/>
        <dbReference type="ChEBI" id="CHEBI:90632"/>
    </reaction>
</comment>
<comment type="activity regulation">
    <text evidence="1">Each monomer binds on GSH molecule but only one subunit is catalytically active.</text>
</comment>
<comment type="subunit">
    <text evidence="1">Homotrimer.</text>
</comment>
<comment type="subcellular location">
    <subcellularLocation>
        <location evidence="1">Endoplasmic reticulum membrane</location>
        <topology evidence="2">Multi-pass membrane protein</topology>
    </subcellularLocation>
    <subcellularLocation>
        <location evidence="1">Microsome membrane</location>
        <topology evidence="2">Multi-pass membrane protein</topology>
    </subcellularLocation>
</comment>
<comment type="disruption phenotype">
    <text evidence="3">Deficient mice display resistance to induced ER stress with reduced cell death and mortality.</text>
</comment>
<feature type="chain" id="PRO_0000449878" description="Microsomal glutathione S-transferase 2">
    <location>
        <begin position="1"/>
        <end position="147"/>
    </location>
</feature>
<feature type="transmembrane region" description="Helical" evidence="2">
    <location>
        <begin position="6"/>
        <end position="26"/>
    </location>
</feature>
<feature type="transmembrane region" description="Helical" evidence="2">
    <location>
        <begin position="62"/>
        <end position="82"/>
    </location>
</feature>
<feature type="transmembrane region" description="Helical" evidence="2">
    <location>
        <begin position="107"/>
        <end position="127"/>
    </location>
</feature>